<reference key="1">
    <citation type="submission" date="2007-04" db="EMBL/GenBank/DDBJ databases">
        <title>Complete genome sequence of Burkholderia multivorans ATCC 17616.</title>
        <authorList>
            <person name="Ohtsubo Y."/>
            <person name="Yamashita A."/>
            <person name="Kurokawa K."/>
            <person name="Takami H."/>
            <person name="Yuhara S."/>
            <person name="Nishiyama E."/>
            <person name="Endo R."/>
            <person name="Miyazaki R."/>
            <person name="Ono A."/>
            <person name="Yano K."/>
            <person name="Ito M."/>
            <person name="Sota M."/>
            <person name="Yuji N."/>
            <person name="Hattori M."/>
            <person name="Tsuda M."/>
        </authorList>
    </citation>
    <scope>NUCLEOTIDE SEQUENCE [LARGE SCALE GENOMIC DNA]</scope>
    <source>
        <strain>ATCC 17616 / 249</strain>
    </source>
</reference>
<reference evidence="6" key="2">
    <citation type="journal article" date="2017" name="Proc. Natl. Acad. Sci. U.S.A.">
        <title>Crystal structures of the Burkholderia multivorans hopanoid transporter HpnN.</title>
        <authorList>
            <person name="Kumar N."/>
            <person name="Su C.C."/>
            <person name="Chou T.H."/>
            <person name="Radhakrishnan A."/>
            <person name="Delmar J.A."/>
            <person name="Rajashankar K.R."/>
            <person name="Yu E.W."/>
        </authorList>
    </citation>
    <scope>X-RAY CRYSTALLOGRAPHY (3.76 ANGSTROMS)</scope>
    <scope>FUNCTION</scope>
    <scope>SUBUNIT</scope>
    <scope>SUBCELLULAR LOCATION</scope>
    <scope>TOPOLOGY</scope>
    <scope>DOMAIN</scope>
    <scope>MUTAGENESIS OF LEU-826</scope>
</reference>
<protein>
    <recommendedName>
        <fullName evidence="3">Hopanoid transporter HpnN</fullName>
    </recommendedName>
</protein>
<sequence>MVTSLIVRLVAWSVRRPVWVVVLSLLIAAFSGVYVARHFKINTDISKLVDAEPQWAALSQAVDRAFPQRNGTILAVVEAPAPEFATAAAHALTESLQKQAAAGRIGPVAEPGGGPFFEHNGLLFLSPQQVADTTSQLASARPLVNELAKNPSLTGLATTLSTTLGQPLLTGQVKLPSMAKLLSRSAATVDDVLAGKPAAFSWRALVDNDAARQPARAFVTVQPVVNYGALKAGAQTSDVIRETARALDLEKRYGAVVRLTGEQPLADDEFSSVEDGAALNGVVTLLVVFVILWLALRSKRMIASVLVTLFVGLVVTAALGLAMVGSLNMISVAFMVLFVGLGVDFSIQYGVKYREERFRDERIDHALIGAAHSMGMPLALATTAVAASFFSFIPTAYRGVSELGLIAGVGMFVALLTTLTLLPALLRLFAPPGESKTPGFPWLAPVDDYLDRHRKPILIGTLAVVIGALPLLAFLHFDFNPLHLKDPHSESMSTLLALKDSPEAAVNDVTLLAPSLADADAAAKRLDALPEVGRTTTLSTFIPADQPEKRAAIATAASTLLPALTQPPAPPATDAQRVAALKRASDLLGYAAEDHPGPGAAAAQHLSQSLAKLAAADSATRDRAERAFADTLRIALNQLAALLQPQEITRDTLPPPLVRDWVAPDGKALVQISPKVPKGVDPNDDTMLRHFATAVKAAEPGAIGGPISILHSANTIISAFLHAALWSIISITILLWITLRRFGDVLRTLVPLLVSGIVTLEMCVVLGMSLNFANIIALPLMLGVGVAFKVYFVMAWRAGQTGLLHSSLTHAVLFSAATTATAFGSLWLSHHPGTSSMGKLLALALTCTLIGAVVFQPVLMGKPRVKRAKNQSQGINE</sequence>
<dbReference type="EMBL" id="AP009386">
    <property type="protein sequence ID" value="BAG47179.1"/>
    <property type="molecule type" value="Genomic_DNA"/>
</dbReference>
<dbReference type="RefSeq" id="WP_012216202.1">
    <property type="nucleotide sequence ID" value="NC_010086.1"/>
</dbReference>
<dbReference type="PDB" id="5KHS">
    <property type="method" value="X-ray"/>
    <property type="resolution" value="3.76 A"/>
    <property type="chains" value="A/B=1-877"/>
</dbReference>
<dbReference type="PDBsum" id="5KHS"/>
<dbReference type="SMR" id="A0A0H3KP92"/>
<dbReference type="STRING" id="395019.BMULJ_05341"/>
<dbReference type="GeneID" id="89567894"/>
<dbReference type="KEGG" id="bmj:BMULJ_05341"/>
<dbReference type="KEGG" id="bmu:Bmul_3184"/>
<dbReference type="eggNOG" id="COG4258">
    <property type="taxonomic scope" value="Bacteria"/>
</dbReference>
<dbReference type="HOGENOM" id="CLU_009099_0_0_4"/>
<dbReference type="Proteomes" id="UP000008815">
    <property type="component" value="Chromosome 2"/>
</dbReference>
<dbReference type="GO" id="GO:0005886">
    <property type="term" value="C:plasma membrane"/>
    <property type="evidence" value="ECO:0007669"/>
    <property type="project" value="UniProtKB-SubCell"/>
</dbReference>
<dbReference type="GO" id="GO:0006869">
    <property type="term" value="P:lipid transport"/>
    <property type="evidence" value="ECO:0007669"/>
    <property type="project" value="UniProtKB-KW"/>
</dbReference>
<dbReference type="Gene3D" id="1.20.1640.10">
    <property type="entry name" value="Multidrug efflux transporter AcrB transmembrane domain"/>
    <property type="match status" value="2"/>
</dbReference>
<dbReference type="InterPro" id="IPR017841">
    <property type="entry name" value="Hopanoid_biosynth_HpnN"/>
</dbReference>
<dbReference type="InterPro" id="IPR004869">
    <property type="entry name" value="MMPL_dom"/>
</dbReference>
<dbReference type="InterPro" id="IPR050545">
    <property type="entry name" value="Mycobact_MmpL"/>
</dbReference>
<dbReference type="InterPro" id="IPR000731">
    <property type="entry name" value="SSD"/>
</dbReference>
<dbReference type="NCBIfam" id="TIGR03480">
    <property type="entry name" value="HpnN"/>
    <property type="match status" value="1"/>
</dbReference>
<dbReference type="PANTHER" id="PTHR33406">
    <property type="entry name" value="MEMBRANE PROTEIN MJ1562-RELATED"/>
    <property type="match status" value="1"/>
</dbReference>
<dbReference type="PANTHER" id="PTHR33406:SF13">
    <property type="entry name" value="MEMBRANE PROTEIN YDFJ"/>
    <property type="match status" value="1"/>
</dbReference>
<dbReference type="Pfam" id="PF03176">
    <property type="entry name" value="MMPL"/>
    <property type="match status" value="1"/>
</dbReference>
<dbReference type="SUPFAM" id="SSF82866">
    <property type="entry name" value="Multidrug efflux transporter AcrB transmembrane domain"/>
    <property type="match status" value="2"/>
</dbReference>
<dbReference type="PROSITE" id="PS50156">
    <property type="entry name" value="SSD"/>
    <property type="match status" value="1"/>
</dbReference>
<gene>
    <name evidence="3" type="primary">hpnN</name>
    <name evidence="5" type="ordered locus">BMULJ_05341</name>
</gene>
<comment type="function">
    <text evidence="2">Essential for hopanoid transport from the cytoplasmic to the outer membrane (PubMed:28584102). Is capable of shuttling hopanoid lipids from the inner membrane to the periplasm, where they probably spontaneously insert to the inner leaflet of the outer membrane, strengthening the cell envelope (PubMed:28584102). May be a proton-motive-force (PMF)-dependent transporter (PubMed:28584102). Is critical for multidrug resistance and cell wall remodeling in Burkholderia (PubMed:28584102).</text>
</comment>
<comment type="subunit">
    <text evidence="2">Homodimer.</text>
</comment>
<comment type="subcellular location">
    <subcellularLocation>
        <location evidence="2">Cell inner membrane</location>
        <topology evidence="2">Multi-pass membrane protein</topology>
    </subcellularLocation>
</comment>
<comment type="domain">
    <text evidence="2">Each subunit creates a channel spanning the outer leaflet of the inner membrane and up to the periplasmic space.</text>
</comment>
<comment type="similarity">
    <text evidence="4">Belongs to the resistance-nodulation-cell division (RND) (TC 2.A.6) family. MmpL subfamily.</text>
</comment>
<keyword id="KW-0002">3D-structure</keyword>
<keyword id="KW-0997">Cell inner membrane</keyword>
<keyword id="KW-1003">Cell membrane</keyword>
<keyword id="KW-0445">Lipid transport</keyword>
<keyword id="KW-0472">Membrane</keyword>
<keyword id="KW-1185">Reference proteome</keyword>
<keyword id="KW-0812">Transmembrane</keyword>
<keyword id="KW-1133">Transmembrane helix</keyword>
<keyword id="KW-0813">Transport</keyword>
<name>HPNN_BURM1</name>
<evidence type="ECO:0000255" key="1">
    <source>
        <dbReference type="PROSITE-ProRule" id="PRU00199"/>
    </source>
</evidence>
<evidence type="ECO:0000269" key="2">
    <source>
    </source>
</evidence>
<evidence type="ECO:0000303" key="3">
    <source>
    </source>
</evidence>
<evidence type="ECO:0000305" key="4"/>
<evidence type="ECO:0000312" key="5">
    <source>
        <dbReference type="EMBL" id="BAG47179.1"/>
    </source>
</evidence>
<evidence type="ECO:0007744" key="6">
    <source>
        <dbReference type="PDB" id="5KHS"/>
    </source>
</evidence>
<feature type="chain" id="PRO_0000457158" description="Hopanoid transporter HpnN">
    <location>
        <begin position="1"/>
        <end position="877"/>
    </location>
</feature>
<feature type="topological domain" description="Cytoplasmic" evidence="2 6">
    <location>
        <begin position="1"/>
        <end position="16"/>
    </location>
</feature>
<feature type="transmembrane region" description="Helical" evidence="2 6">
    <location>
        <begin position="17"/>
        <end position="37"/>
    </location>
</feature>
<feature type="topological domain" description="Periplasmic" evidence="2 6">
    <location>
        <begin position="38"/>
        <end position="279"/>
    </location>
</feature>
<feature type="transmembrane region" description="Helical" evidence="2 6">
    <location>
        <begin position="280"/>
        <end position="295"/>
    </location>
</feature>
<feature type="topological domain" description="Cytoplasmic" evidence="2 6">
    <location>
        <begin position="296"/>
        <end position="299"/>
    </location>
</feature>
<feature type="transmembrane region" description="Helical" evidence="2 6">
    <location>
        <begin position="300"/>
        <end position="323"/>
    </location>
</feature>
<feature type="topological domain" description="Periplasmic" evidence="2 6">
    <location>
        <begin position="324"/>
        <end position="332"/>
    </location>
</feature>
<feature type="transmembrane region" description="Helical" evidence="2 6">
    <location>
        <begin position="333"/>
        <end position="351"/>
    </location>
</feature>
<feature type="topological domain" description="Cytoplasmic" evidence="2 6">
    <location>
        <begin position="352"/>
        <end position="373"/>
    </location>
</feature>
<feature type="transmembrane region" description="Helical" evidence="2 6">
    <location>
        <begin position="374"/>
        <end position="394"/>
    </location>
</feature>
<feature type="topological domain" description="Periplasmic" evidence="2 6">
    <location>
        <begin position="395"/>
        <end position="399"/>
    </location>
</feature>
<feature type="transmembrane region" description="Helical" evidence="2 6">
    <location>
        <begin position="400"/>
        <end position="426"/>
    </location>
</feature>
<feature type="topological domain" description="Cytoplasmic" evidence="2 6">
    <location>
        <begin position="427"/>
        <end position="452"/>
    </location>
</feature>
<feature type="transmembrane region" description="Helical" evidence="2 6">
    <location>
        <begin position="453"/>
        <end position="472"/>
    </location>
</feature>
<feature type="topological domain" description="Periplasmic" evidence="2 6">
    <location>
        <begin position="473"/>
        <end position="718"/>
    </location>
</feature>
<feature type="transmembrane region" description="Helical" evidence="2 6">
    <location>
        <begin position="719"/>
        <end position="739"/>
    </location>
</feature>
<feature type="topological domain" description="Cytoplasmic" evidence="2 6">
    <location>
        <begin position="740"/>
        <end position="743"/>
    </location>
</feature>
<feature type="transmembrane region" description="Helical" evidence="2 6">
    <location>
        <begin position="744"/>
        <end position="766"/>
    </location>
</feature>
<feature type="topological domain" description="Periplasmic" evidence="2 6">
    <location>
        <begin position="767"/>
        <end position="774"/>
    </location>
</feature>
<feature type="transmembrane region" description="Helical" evidence="2 6">
    <location>
        <begin position="775"/>
        <end position="794"/>
    </location>
</feature>
<feature type="topological domain" description="Cytoplasmic" evidence="2 6">
    <location>
        <begin position="795"/>
        <end position="809"/>
    </location>
</feature>
<feature type="transmembrane region" description="Helical" evidence="2 6">
    <location>
        <begin position="810"/>
        <end position="827"/>
    </location>
</feature>
<feature type="topological domain" description="Periplasmic" evidence="2 6">
    <location>
        <begin position="828"/>
        <end position="836"/>
    </location>
</feature>
<feature type="transmembrane region" description="Helical" evidence="2 6">
    <location>
        <begin position="837"/>
        <end position="858"/>
    </location>
</feature>
<feature type="topological domain" description="Cytoplasmic" evidence="2 6">
    <location>
        <begin position="859"/>
        <end position="877"/>
    </location>
</feature>
<feature type="domain" description="SSD" evidence="1">
    <location>
        <begin position="302"/>
        <end position="428"/>
    </location>
</feature>
<feature type="mutagenesis site" description="Decreases binding of hopanoids." evidence="2">
    <original>L</original>
    <variation>F</variation>
    <location>
        <position position="826"/>
    </location>
</feature>
<proteinExistence type="evidence at protein level"/>
<accession>A0A0H3KP92</accession>
<organism>
    <name type="scientific">Burkholderia multivorans (strain ATCC 17616 / 249)</name>
    <dbReference type="NCBI Taxonomy" id="395019"/>
    <lineage>
        <taxon>Bacteria</taxon>
        <taxon>Pseudomonadati</taxon>
        <taxon>Pseudomonadota</taxon>
        <taxon>Betaproteobacteria</taxon>
        <taxon>Burkholderiales</taxon>
        <taxon>Burkholderiaceae</taxon>
        <taxon>Burkholderia</taxon>
        <taxon>Burkholderia cepacia complex</taxon>
    </lineage>
</organism>